<feature type="signal peptide" evidence="3">
    <location>
        <begin position="1"/>
        <end position="24"/>
    </location>
</feature>
<feature type="propeptide" id="PRO_0000388731" evidence="4 5">
    <location>
        <begin position="25"/>
        <end position="45"/>
    </location>
</feature>
<feature type="chain" id="PRO_0000388732" description="Alpha-conotoxin Ms20.3">
    <location>
        <begin position="46"/>
        <end position="94"/>
    </location>
</feature>
<feature type="modified residue" description="4-carboxyglutamate" evidence="4">
    <location>
        <position position="49"/>
    </location>
</feature>
<feature type="modified residue" description="4-hydroxyproline" evidence="4">
    <location>
        <position position="55"/>
    </location>
</feature>
<feature type="disulfide bond" description="Interchain (with C-63)" evidence="1">
    <location>
        <position position="50"/>
    </location>
</feature>
<feature type="disulfide bond" description="Interchain (with C-51)" evidence="1">
    <location>
        <position position="62"/>
    </location>
</feature>
<feature type="disulfide bond" evidence="1">
    <location>
        <begin position="63"/>
        <end position="72"/>
    </location>
</feature>
<feature type="disulfide bond" evidence="1">
    <location>
        <begin position="68"/>
        <end position="80"/>
    </location>
</feature>
<feature type="disulfide bond" evidence="1">
    <location>
        <begin position="73"/>
        <end position="90"/>
    </location>
</feature>
<feature type="disulfide bond" evidence="1">
    <location>
        <begin position="78"/>
        <end position="92"/>
    </location>
</feature>
<feature type="sequence conflict" description="In Ref. 2; ACP50600." evidence="6" ref="2">
    <original>S</original>
    <variation>K</variation>
    <location>
        <position position="58"/>
    </location>
</feature>
<keyword id="KW-0008">Acetylcholine receptor inhibiting toxin</keyword>
<keyword id="KW-0903">Direct protein sequencing</keyword>
<keyword id="KW-1015">Disulfide bond</keyword>
<keyword id="KW-0301">Gamma-carboxyglutamic acid</keyword>
<keyword id="KW-0379">Hydroxylation</keyword>
<keyword id="KW-0872">Ion channel impairing toxin</keyword>
<keyword id="KW-0528">Neurotoxin</keyword>
<keyword id="KW-0629">Postsynaptic neurotoxin</keyword>
<keyword id="KW-0964">Secreted</keyword>
<keyword id="KW-0732">Signal</keyword>
<keyword id="KW-0800">Toxin</keyword>
<accession>C3VVN5</accession>
<proteinExistence type="evidence at protein level"/>
<reference key="1">
    <citation type="journal article" date="2009" name="Biochemistry">
        <title>Novel alpha D-conopeptides and their precursors identified by cDNA cloning define the D-conotoxin superfamily.</title>
        <authorList>
            <person name="Loughnan M.L."/>
            <person name="Nicke A."/>
            <person name="Lawrence N."/>
            <person name="Lewis R.J."/>
        </authorList>
    </citation>
    <scope>NUCLEOTIDE SEQUENCE [MRNA]</scope>
    <scope>PROTEIN SEQUENCE OF 46-64</scope>
    <scope>GAMMA-CARBOXYGLUTAMATION AT GLU-49</scope>
    <scope>HYDROXYLATION AT PRO-55</scope>
    <scope>SUBUNIT</scope>
    <source>
        <tissue>Venom</tissue>
        <tissue>Venom duct</tissue>
    </source>
</reference>
<reference key="2">
    <citation type="journal article" date="2009" name="Toxicon">
        <title>New conopeptides of the D-superfamily selectively inhibiting neuronal nicotinic acetylcholine receptors.</title>
        <authorList>
            <person name="Kauferstein S."/>
            <person name="Kendel Y."/>
            <person name="Nicke A."/>
            <person name="Coronas F.I.V."/>
            <person name="Possani L.D."/>
            <person name="Favreau P."/>
            <person name="Krizaj I."/>
            <person name="Wunder C."/>
            <person name="Kauert G."/>
            <person name="Mebs D."/>
        </authorList>
    </citation>
    <scope>NUCLEOTIDE SEQUENCE [MRNA]</scope>
    <scope>PROTEIN SEQUENCE OF 46-54 AND 56-57</scope>
    <scope>FUNCTION</scope>
    <scope>SUBUNIT</scope>
    <scope>SUBCELLULAR LOCATION</scope>
    <scope>TISSUE SPECIFICITY</scope>
    <source>
        <tissue>Venom</tissue>
        <tissue>Venom duct</tissue>
    </source>
</reference>
<organism>
    <name type="scientific">Conus mustelinus</name>
    <name type="common">Weasel cone</name>
    <dbReference type="NCBI Taxonomy" id="101309"/>
    <lineage>
        <taxon>Eukaryota</taxon>
        <taxon>Metazoa</taxon>
        <taxon>Spiralia</taxon>
        <taxon>Lophotrochozoa</taxon>
        <taxon>Mollusca</taxon>
        <taxon>Gastropoda</taxon>
        <taxon>Caenogastropoda</taxon>
        <taxon>Neogastropoda</taxon>
        <taxon>Conoidea</taxon>
        <taxon>Conidae</taxon>
        <taxon>Conus</taxon>
        <taxon>Rhizoconus</taxon>
    </lineage>
</organism>
<name>CDK3_CONMS</name>
<protein>
    <recommendedName>
        <fullName>Alpha-conotoxin Ms20.3</fullName>
    </recommendedName>
    <alternativeName>
        <fullName>Conopeptide alpha-D Ms</fullName>
    </alternativeName>
</protein>
<sequence>MPKLAVVLLVLLILPLSYFDAAGGQVVQGDRRGNGLARYLQRGDRDVRECQVNTPGSSWGKCCMTRMCGTMCCARSGCTCVYHWRRGHGCSCPG</sequence>
<dbReference type="EMBL" id="FJ896005">
    <property type="protein sequence ID" value="ACP50600.1"/>
    <property type="molecule type" value="mRNA"/>
</dbReference>
<dbReference type="SMR" id="C3VVN5"/>
<dbReference type="ConoServer" id="3728">
    <property type="toxin name" value="Ms20.3 precursor"/>
</dbReference>
<dbReference type="GO" id="GO:0005576">
    <property type="term" value="C:extracellular region"/>
    <property type="evidence" value="ECO:0007669"/>
    <property type="project" value="UniProtKB-SubCell"/>
</dbReference>
<dbReference type="GO" id="GO:0035792">
    <property type="term" value="C:host cell postsynaptic membrane"/>
    <property type="evidence" value="ECO:0007669"/>
    <property type="project" value="UniProtKB-KW"/>
</dbReference>
<dbReference type="GO" id="GO:0030550">
    <property type="term" value="F:acetylcholine receptor inhibitor activity"/>
    <property type="evidence" value="ECO:0007669"/>
    <property type="project" value="UniProtKB-KW"/>
</dbReference>
<dbReference type="GO" id="GO:0099106">
    <property type="term" value="F:ion channel regulator activity"/>
    <property type="evidence" value="ECO:0007669"/>
    <property type="project" value="UniProtKB-KW"/>
</dbReference>
<dbReference type="GO" id="GO:0090729">
    <property type="term" value="F:toxin activity"/>
    <property type="evidence" value="ECO:0007669"/>
    <property type="project" value="UniProtKB-KW"/>
</dbReference>
<comment type="function">
    <text evidence="2 5">Alpha-D-conopeptides act on postsynaptic membranes, they bind to the nicotinic acetylcholine receptors (nAChR) and thus inhibit them. Through its two C-terminal domains, this homodimeric protein would bind to two nAChR allosteric sites, located outside the nAChR C-loop of the principal binding face and at the adjacent binding interface in a clockwise direction (By similarity). This toxin specifically blocks mammalian neuronal nAChR of the alpha-7/CHRNA7 (IC(50)=0.12 nM), alpha-3-beta-2/CHRNA3-CHRNB2 (IC(50)=1.08 nM), and alpha-4-beta-2/CHRNA4-CHRNB2 (IC(50)=4.5 nM) subtypes (PubMed:19393680). Has no effect on alpha-3-beta-4/CHRNA3-CHRNB4, alpha-4-beta-4/CHRNA4-CHRNB4 and alpha-1-beta-1-epsilon-delta/CHRNA1-CHRNB1-CHRNE-CHRND subtypes of nAChRs (PubMed:19393680).</text>
</comment>
<comment type="subunit">
    <text evidence="4 5">Hetero-, homo- or pseudo-homodimer (identical sequence, different post-translational modifications). Homodimer of [carboxyGlu-49, hydroxyPro-55]Ms20.3, and heterodimer of [carboxyGlu-49, hydroxyPro-55]Ms20.3 and [carboxy'Glu-50', hydroxy'Pro-56']Ms20.5 may exist.</text>
</comment>
<comment type="subcellular location">
    <subcellularLocation>
        <location evidence="5">Secreted</location>
    </subcellularLocation>
</comment>
<comment type="tissue specificity">
    <text evidence="5">Expressed by the venom duct.</text>
</comment>
<comment type="domain">
    <text>The cysteine framework is XX (C-CC-C-CC-C-C-C-C).</text>
</comment>
<comment type="domain">
    <text evidence="2">Displays a mini-granulin fold, a structure composed of two short, stacked beta-hairpins connected by two parallel disulfide bonds. This newly described fold is derived from the same cysteine connectivity as knottins (ICK fold). The name 'mini-granulin fold' comes from the structural homology with the N-terminal region of the human granulin.</text>
</comment>
<comment type="similarity">
    <text evidence="6">Belongs to the conotoxin D superfamily.</text>
</comment>
<evidence type="ECO:0000250" key="1">
    <source>
        <dbReference type="UniProtKB" id="A0A0A0VBX4"/>
    </source>
</evidence>
<evidence type="ECO:0000250" key="2">
    <source>
        <dbReference type="UniProtKB" id="P0C1W6"/>
    </source>
</evidence>
<evidence type="ECO:0000255" key="3"/>
<evidence type="ECO:0000269" key="4">
    <source>
    </source>
</evidence>
<evidence type="ECO:0000269" key="5">
    <source>
    </source>
</evidence>
<evidence type="ECO:0000305" key="6"/>